<sequence length="32" mass="3789">MKKRFDWCLILIDIIEKLLNEADLSILIIVIC</sequence>
<name>YNYF_SCHPO</name>
<feature type="chain" id="PRO_0000116865" description="Uncharacterized protein C1711.15c">
    <location>
        <begin position="1"/>
        <end position="32"/>
    </location>
</feature>
<dbReference type="EMBL" id="CU329671">
    <property type="protein sequence ID" value="CAB88245.1"/>
    <property type="molecule type" value="Genomic_DNA"/>
</dbReference>
<dbReference type="RefSeq" id="NP_595888.1">
    <property type="nucleotide sequence ID" value="NM_001021794.2"/>
</dbReference>
<dbReference type="BioGRID" id="276202">
    <property type="interactions" value="1"/>
</dbReference>
<dbReference type="STRING" id="284812.Q9P776"/>
<dbReference type="PaxDb" id="4896-SPBC1711.15c.1"/>
<dbReference type="EnsemblFungi" id="SPBC1711.15c.1">
    <property type="protein sequence ID" value="SPBC1711.15c.1:pep"/>
    <property type="gene ID" value="SPBC1711.15c"/>
</dbReference>
<dbReference type="PomBase" id="SPBC1711.15c"/>
<dbReference type="VEuPathDB" id="FungiDB:SPBC1711.15c"/>
<dbReference type="HOGENOM" id="CLU_3392526_0_0_1"/>
<dbReference type="InParanoid" id="Q9P776"/>
<dbReference type="PRO" id="PR:Q9P776"/>
<dbReference type="Proteomes" id="UP000002485">
    <property type="component" value="Chromosome II"/>
</dbReference>
<dbReference type="GO" id="GO:0005829">
    <property type="term" value="C:cytosol"/>
    <property type="evidence" value="ECO:0007005"/>
    <property type="project" value="PomBase"/>
</dbReference>
<dbReference type="GO" id="GO:0005634">
    <property type="term" value="C:nucleus"/>
    <property type="evidence" value="ECO:0007005"/>
    <property type="project" value="PomBase"/>
</dbReference>
<organism>
    <name type="scientific">Schizosaccharomyces pombe (strain 972 / ATCC 24843)</name>
    <name type="common">Fission yeast</name>
    <dbReference type="NCBI Taxonomy" id="284812"/>
    <lineage>
        <taxon>Eukaryota</taxon>
        <taxon>Fungi</taxon>
        <taxon>Dikarya</taxon>
        <taxon>Ascomycota</taxon>
        <taxon>Taphrinomycotina</taxon>
        <taxon>Schizosaccharomycetes</taxon>
        <taxon>Schizosaccharomycetales</taxon>
        <taxon>Schizosaccharomycetaceae</taxon>
        <taxon>Schizosaccharomyces</taxon>
    </lineage>
</organism>
<keyword id="KW-1185">Reference proteome</keyword>
<reference key="1">
    <citation type="journal article" date="2002" name="Nature">
        <title>The genome sequence of Schizosaccharomyces pombe.</title>
        <authorList>
            <person name="Wood V."/>
            <person name="Gwilliam R."/>
            <person name="Rajandream M.A."/>
            <person name="Lyne M.H."/>
            <person name="Lyne R."/>
            <person name="Stewart A."/>
            <person name="Sgouros J.G."/>
            <person name="Peat N."/>
            <person name="Hayles J."/>
            <person name="Baker S.G."/>
            <person name="Basham D."/>
            <person name="Bowman S."/>
            <person name="Brooks K."/>
            <person name="Brown D."/>
            <person name="Brown S."/>
            <person name="Chillingworth T."/>
            <person name="Churcher C.M."/>
            <person name="Collins M."/>
            <person name="Connor R."/>
            <person name="Cronin A."/>
            <person name="Davis P."/>
            <person name="Feltwell T."/>
            <person name="Fraser A."/>
            <person name="Gentles S."/>
            <person name="Goble A."/>
            <person name="Hamlin N."/>
            <person name="Harris D.E."/>
            <person name="Hidalgo J."/>
            <person name="Hodgson G."/>
            <person name="Holroyd S."/>
            <person name="Hornsby T."/>
            <person name="Howarth S."/>
            <person name="Huckle E.J."/>
            <person name="Hunt S."/>
            <person name="Jagels K."/>
            <person name="James K.D."/>
            <person name="Jones L."/>
            <person name="Jones M."/>
            <person name="Leather S."/>
            <person name="McDonald S."/>
            <person name="McLean J."/>
            <person name="Mooney P."/>
            <person name="Moule S."/>
            <person name="Mungall K.L."/>
            <person name="Murphy L.D."/>
            <person name="Niblett D."/>
            <person name="Odell C."/>
            <person name="Oliver K."/>
            <person name="O'Neil S."/>
            <person name="Pearson D."/>
            <person name="Quail M.A."/>
            <person name="Rabbinowitsch E."/>
            <person name="Rutherford K.M."/>
            <person name="Rutter S."/>
            <person name="Saunders D."/>
            <person name="Seeger K."/>
            <person name="Sharp S."/>
            <person name="Skelton J."/>
            <person name="Simmonds M.N."/>
            <person name="Squares R."/>
            <person name="Squares S."/>
            <person name="Stevens K."/>
            <person name="Taylor K."/>
            <person name="Taylor R.G."/>
            <person name="Tivey A."/>
            <person name="Walsh S.V."/>
            <person name="Warren T."/>
            <person name="Whitehead S."/>
            <person name="Woodward J.R."/>
            <person name="Volckaert G."/>
            <person name="Aert R."/>
            <person name="Robben J."/>
            <person name="Grymonprez B."/>
            <person name="Weltjens I."/>
            <person name="Vanstreels E."/>
            <person name="Rieger M."/>
            <person name="Schaefer M."/>
            <person name="Mueller-Auer S."/>
            <person name="Gabel C."/>
            <person name="Fuchs M."/>
            <person name="Duesterhoeft A."/>
            <person name="Fritzc C."/>
            <person name="Holzer E."/>
            <person name="Moestl D."/>
            <person name="Hilbert H."/>
            <person name="Borzym K."/>
            <person name="Langer I."/>
            <person name="Beck A."/>
            <person name="Lehrach H."/>
            <person name="Reinhardt R."/>
            <person name="Pohl T.M."/>
            <person name="Eger P."/>
            <person name="Zimmermann W."/>
            <person name="Wedler H."/>
            <person name="Wambutt R."/>
            <person name="Purnelle B."/>
            <person name="Goffeau A."/>
            <person name="Cadieu E."/>
            <person name="Dreano S."/>
            <person name="Gloux S."/>
            <person name="Lelaure V."/>
            <person name="Mottier S."/>
            <person name="Galibert F."/>
            <person name="Aves S.J."/>
            <person name="Xiang Z."/>
            <person name="Hunt C."/>
            <person name="Moore K."/>
            <person name="Hurst S.M."/>
            <person name="Lucas M."/>
            <person name="Rochet M."/>
            <person name="Gaillardin C."/>
            <person name="Tallada V.A."/>
            <person name="Garzon A."/>
            <person name="Thode G."/>
            <person name="Daga R.R."/>
            <person name="Cruzado L."/>
            <person name="Jimenez J."/>
            <person name="Sanchez M."/>
            <person name="del Rey F."/>
            <person name="Benito J."/>
            <person name="Dominguez A."/>
            <person name="Revuelta J.L."/>
            <person name="Moreno S."/>
            <person name="Armstrong J."/>
            <person name="Forsburg S.L."/>
            <person name="Cerutti L."/>
            <person name="Lowe T."/>
            <person name="McCombie W.R."/>
            <person name="Paulsen I."/>
            <person name="Potashkin J."/>
            <person name="Shpakovski G.V."/>
            <person name="Ussery D."/>
            <person name="Barrell B.G."/>
            <person name="Nurse P."/>
        </authorList>
    </citation>
    <scope>NUCLEOTIDE SEQUENCE [LARGE SCALE GENOMIC DNA]</scope>
    <source>
        <strain>972 / ATCC 24843</strain>
    </source>
</reference>
<protein>
    <recommendedName>
        <fullName>Uncharacterized protein C1711.15c</fullName>
    </recommendedName>
</protein>
<accession>Q9P776</accession>
<gene>
    <name type="ORF">SPBC1711.15c</name>
</gene>
<proteinExistence type="predicted"/>